<proteinExistence type="evidence at protein level"/>
<organism>
    <name type="scientific">Cupriavidus pinatubonensis (strain JMP 134 / LMG 1197)</name>
    <name type="common">Cupriavidus necator (strain JMP 134)</name>
    <dbReference type="NCBI Taxonomy" id="264198"/>
    <lineage>
        <taxon>Bacteria</taxon>
        <taxon>Pseudomonadati</taxon>
        <taxon>Pseudomonadota</taxon>
        <taxon>Betaproteobacteria</taxon>
        <taxon>Burkholderiales</taxon>
        <taxon>Burkholderiaceae</taxon>
        <taxon>Cupriavidus</taxon>
    </lineage>
</organism>
<comment type="catalytic activity">
    <reaction>
        <text>2-[(2R)-2-chloro-2,5-dihydro-5-oxofuryl]acetate = 3-chloro-cis,cis-muconate + H(+)</text>
        <dbReference type="Rhea" id="RHEA:11032"/>
        <dbReference type="ChEBI" id="CHEBI:15378"/>
        <dbReference type="ChEBI" id="CHEBI:17589"/>
        <dbReference type="ChEBI" id="CHEBI:85538"/>
        <dbReference type="EC" id="5.5.1.7"/>
    </reaction>
</comment>
<comment type="cofactor">
    <cofactor>
        <name>Mn(2+)</name>
        <dbReference type="ChEBI" id="CHEBI:29035"/>
    </cofactor>
</comment>
<comment type="pathway">
    <text>Aromatic compound metabolism; 3-chlorocatechol degradation.</text>
</comment>
<comment type="miscellaneous">
    <text>Chloromuconate cycloisomerase II is highly active toward chlorinated substrates but retains diminished activity toward the non-chlorinated substrates.</text>
</comment>
<comment type="similarity">
    <text evidence="2">Belongs to the mandelate racemase/muconate lactonizing enzyme family.</text>
</comment>
<evidence type="ECO:0000250" key="1"/>
<evidence type="ECO:0000305" key="2"/>
<evidence type="ECO:0007829" key="3">
    <source>
        <dbReference type="PDB" id="2CHR"/>
    </source>
</evidence>
<sequence length="370" mass="39722">MKIDAIEAVIVDVPTKRPIQMSITTVHQQSYVIVRVYSEGLVGVGEGGSVGGPVWSAECAETIKIIVERYLAPHLLGTDAFNVSGALQTMARAVTGNASAKAAVEMALLDLKARALGVSIAELLGGPLRSAIPIAWTLASGDTKRDLDSAVEMIERRRHNRFKVKLGFRSPQDDLIHMEALSNSLGSKAYLRVDVNQAWDEQVASVYIPELEALGVELIEQPVGRENTQALRRLSDNNRVAIMADESLSTLASAFDLARDRSVDVFSLKLCNMGGVSATQKIAAVAEASGIASYGGTMLDSTIGTSVALQLYSTVPSLPFGCELIGPFVLADTLSHEPLEIRDYELQVPTGVGHGMTLDEDKVRQYARVS</sequence>
<dbReference type="EC" id="5.5.1.7"/>
<dbReference type="EMBL" id="M35097">
    <property type="protein sequence ID" value="AAA98263.1"/>
    <property type="molecule type" value="Genomic_DNA"/>
</dbReference>
<dbReference type="EMBL" id="M31458">
    <property type="protein sequence ID" value="AAA98267.1"/>
    <property type="molecule type" value="Genomic_DNA"/>
</dbReference>
<dbReference type="EMBL" id="AY365053">
    <property type="protein sequence ID" value="AAR31038.1"/>
    <property type="molecule type" value="Genomic_DNA"/>
</dbReference>
<dbReference type="EMBL" id="CP000093">
    <property type="protein sequence ID" value="AAZ65763.1"/>
    <property type="molecule type" value="Genomic_DNA"/>
</dbReference>
<dbReference type="PIR" id="B35255">
    <property type="entry name" value="B35255"/>
</dbReference>
<dbReference type="RefSeq" id="WP_011178385.1">
    <property type="nucleotide sequence ID" value="NZ_AY365053.1"/>
</dbReference>
<dbReference type="PDB" id="2CHR">
    <property type="method" value="X-ray"/>
    <property type="resolution" value="3.00 A"/>
    <property type="chains" value="A=1-370"/>
</dbReference>
<dbReference type="PDBsum" id="2CHR"/>
<dbReference type="SMR" id="P05404"/>
<dbReference type="GeneID" id="55536835"/>
<dbReference type="KEGG" id="reu:Reut_D6465"/>
<dbReference type="HOGENOM" id="CLU_030273_4_5_4"/>
<dbReference type="OrthoDB" id="5596677at2"/>
<dbReference type="BioCyc" id="MetaCyc:MONOMER-14403"/>
<dbReference type="UniPathway" id="UPA00083"/>
<dbReference type="EvolutionaryTrace" id="P05404"/>
<dbReference type="GO" id="GO:0018850">
    <property type="term" value="F:chloromuconate cycloisomerase activity"/>
    <property type="evidence" value="ECO:0007669"/>
    <property type="project" value="UniProtKB-EC"/>
</dbReference>
<dbReference type="GO" id="GO:0030145">
    <property type="term" value="F:manganese ion binding"/>
    <property type="evidence" value="ECO:0007669"/>
    <property type="project" value="InterPro"/>
</dbReference>
<dbReference type="GO" id="GO:0018849">
    <property type="term" value="F:muconate cycloisomerase activity"/>
    <property type="evidence" value="ECO:0007669"/>
    <property type="project" value="InterPro"/>
</dbReference>
<dbReference type="GO" id="GO:0009063">
    <property type="term" value="P:amino acid catabolic process"/>
    <property type="evidence" value="ECO:0007669"/>
    <property type="project" value="InterPro"/>
</dbReference>
<dbReference type="CDD" id="cd03318">
    <property type="entry name" value="MLE"/>
    <property type="match status" value="1"/>
</dbReference>
<dbReference type="Gene3D" id="3.20.20.120">
    <property type="entry name" value="Enolase-like C-terminal domain"/>
    <property type="match status" value="1"/>
</dbReference>
<dbReference type="Gene3D" id="3.30.390.10">
    <property type="entry name" value="Enolase-like, N-terminal domain"/>
    <property type="match status" value="1"/>
</dbReference>
<dbReference type="InterPro" id="IPR013370">
    <property type="entry name" value="Chloromuconate_cycloisomerase"/>
</dbReference>
<dbReference type="InterPro" id="IPR036849">
    <property type="entry name" value="Enolase-like_C_sf"/>
</dbReference>
<dbReference type="InterPro" id="IPR029017">
    <property type="entry name" value="Enolase-like_N"/>
</dbReference>
<dbReference type="InterPro" id="IPR029065">
    <property type="entry name" value="Enolase_C-like"/>
</dbReference>
<dbReference type="InterPro" id="IPR018110">
    <property type="entry name" value="Mandel_Rmase/mucon_lact_enz_CS"/>
</dbReference>
<dbReference type="InterPro" id="IPR013342">
    <property type="entry name" value="Mandelate_racemase_C"/>
</dbReference>
<dbReference type="InterPro" id="IPR013341">
    <property type="entry name" value="Mandelate_racemase_N_dom"/>
</dbReference>
<dbReference type="NCBIfam" id="TIGR02534">
    <property type="entry name" value="mucon_cyclo"/>
    <property type="match status" value="1"/>
</dbReference>
<dbReference type="PANTHER" id="PTHR48073:SF2">
    <property type="entry name" value="O-SUCCINYLBENZOATE SYNTHASE"/>
    <property type="match status" value="1"/>
</dbReference>
<dbReference type="PANTHER" id="PTHR48073">
    <property type="entry name" value="O-SUCCINYLBENZOATE SYNTHASE-RELATED"/>
    <property type="match status" value="1"/>
</dbReference>
<dbReference type="Pfam" id="PF13378">
    <property type="entry name" value="MR_MLE_C"/>
    <property type="match status" value="1"/>
</dbReference>
<dbReference type="Pfam" id="PF02746">
    <property type="entry name" value="MR_MLE_N"/>
    <property type="match status" value="1"/>
</dbReference>
<dbReference type="SFLD" id="SFLDG01258">
    <property type="entry name" value="(chloro)muconate_cycloisomeras"/>
    <property type="match status" value="1"/>
</dbReference>
<dbReference type="SFLD" id="SFLDS00001">
    <property type="entry name" value="Enolase"/>
    <property type="match status" value="1"/>
</dbReference>
<dbReference type="SMART" id="SM00922">
    <property type="entry name" value="MR_MLE"/>
    <property type="match status" value="1"/>
</dbReference>
<dbReference type="SUPFAM" id="SSF51604">
    <property type="entry name" value="Enolase C-terminal domain-like"/>
    <property type="match status" value="1"/>
</dbReference>
<dbReference type="SUPFAM" id="SSF54826">
    <property type="entry name" value="Enolase N-terminal domain-like"/>
    <property type="match status" value="1"/>
</dbReference>
<dbReference type="PROSITE" id="PS00908">
    <property type="entry name" value="MR_MLE_1"/>
    <property type="match status" value="1"/>
</dbReference>
<dbReference type="PROSITE" id="PS00909">
    <property type="entry name" value="MR_MLE_2"/>
    <property type="match status" value="1"/>
</dbReference>
<gene>
    <name type="primary">tfdDI</name>
    <name type="synonym">tfdD</name>
    <name type="ordered locus">Reut_D6465</name>
</gene>
<name>TFDD1_CUPPJ</name>
<accession>P05404</accession>
<accession>Q46M67</accession>
<feature type="chain" id="PRO_0000171256" description="Chloromuconate cycloisomerase">
    <location>
        <begin position="1"/>
        <end position="370"/>
    </location>
</feature>
<feature type="active site" description="Proton acceptor" evidence="1">
    <location>
        <position position="165"/>
    </location>
</feature>
<feature type="active site" description="Proton donor" evidence="1">
    <location>
        <position position="323"/>
    </location>
</feature>
<feature type="binding site" evidence="1">
    <location>
        <position position="194"/>
    </location>
    <ligand>
        <name>Mn(2+)</name>
        <dbReference type="ChEBI" id="CHEBI:29035"/>
    </ligand>
</feature>
<feature type="binding site">
    <location>
        <position position="220"/>
    </location>
    <ligand>
        <name>Mn(2+)</name>
        <dbReference type="ChEBI" id="CHEBI:29035"/>
    </ligand>
</feature>
<feature type="binding site">
    <location>
        <position position="245"/>
    </location>
    <ligand>
        <name>Mn(2+)</name>
        <dbReference type="ChEBI" id="CHEBI:29035"/>
    </ligand>
</feature>
<feature type="sequence conflict" description="In Ref. 2; AAA98267." evidence="2" ref="2">
    <original>SVALQLYSTVPSLPFGCELI</original>
    <variation>RLHSAYLRFHASVRLRTV</variation>
    <location>
        <begin position="306"/>
        <end position="325"/>
    </location>
</feature>
<feature type="strand" evidence="3">
    <location>
        <begin position="5"/>
        <end position="20"/>
    </location>
</feature>
<feature type="strand" evidence="3">
    <location>
        <begin position="25"/>
        <end position="38"/>
    </location>
</feature>
<feature type="strand" evidence="3">
    <location>
        <begin position="44"/>
        <end position="46"/>
    </location>
</feature>
<feature type="turn" evidence="3">
    <location>
        <begin position="51"/>
        <end position="55"/>
    </location>
</feature>
<feature type="helix" evidence="3">
    <location>
        <begin position="60"/>
        <end position="70"/>
    </location>
</feature>
<feature type="helix" evidence="3">
    <location>
        <begin position="72"/>
        <end position="75"/>
    </location>
</feature>
<feature type="helix" evidence="3">
    <location>
        <begin position="83"/>
        <end position="91"/>
    </location>
</feature>
<feature type="helix" evidence="3">
    <location>
        <begin position="98"/>
        <end position="115"/>
    </location>
</feature>
<feature type="helix" evidence="3">
    <location>
        <begin position="120"/>
        <end position="123"/>
    </location>
</feature>
<feature type="strand" evidence="3">
    <location>
        <begin position="130"/>
        <end position="138"/>
    </location>
</feature>
<feature type="helix" evidence="3">
    <location>
        <begin position="143"/>
        <end position="155"/>
    </location>
</feature>
<feature type="strand" evidence="3">
    <location>
        <begin position="161"/>
        <end position="165"/>
    </location>
</feature>
<feature type="strand" evidence="3">
    <location>
        <begin position="167"/>
        <end position="169"/>
    </location>
</feature>
<feature type="helix" evidence="3">
    <location>
        <begin position="171"/>
        <end position="184"/>
    </location>
</feature>
<feature type="turn" evidence="3">
    <location>
        <begin position="185"/>
        <end position="188"/>
    </location>
</feature>
<feature type="strand" evidence="3">
    <location>
        <begin position="189"/>
        <end position="194"/>
    </location>
</feature>
<feature type="helix" evidence="3">
    <location>
        <begin position="202"/>
        <end position="212"/>
    </location>
</feature>
<feature type="turn" evidence="3">
    <location>
        <begin position="213"/>
        <end position="215"/>
    </location>
</feature>
<feature type="strand" evidence="3">
    <location>
        <begin position="218"/>
        <end position="220"/>
    </location>
</feature>
<feature type="helix" evidence="3">
    <location>
        <begin position="228"/>
        <end position="237"/>
    </location>
</feature>
<feature type="strand" evidence="3">
    <location>
        <begin position="239"/>
        <end position="247"/>
    </location>
</feature>
<feature type="helix" evidence="3">
    <location>
        <begin position="251"/>
        <end position="258"/>
    </location>
</feature>
<feature type="turn" evidence="3">
    <location>
        <begin position="259"/>
        <end position="261"/>
    </location>
</feature>
<feature type="strand" evidence="3">
    <location>
        <begin position="264"/>
        <end position="266"/>
    </location>
</feature>
<feature type="helix" evidence="3">
    <location>
        <begin position="270"/>
        <end position="273"/>
    </location>
</feature>
<feature type="helix" evidence="3">
    <location>
        <begin position="276"/>
        <end position="289"/>
    </location>
</feature>
<feature type="helix" evidence="3">
    <location>
        <begin position="302"/>
        <end position="312"/>
    </location>
</feature>
<feature type="helix" evidence="3">
    <location>
        <begin position="326"/>
        <end position="329"/>
    </location>
</feature>
<feature type="strand" evidence="3">
    <location>
        <begin position="334"/>
        <end position="336"/>
    </location>
</feature>
<feature type="strand" evidence="3">
    <location>
        <begin position="343"/>
        <end position="347"/>
    </location>
</feature>
<feature type="strand" evidence="3">
    <location>
        <begin position="351"/>
        <end position="353"/>
    </location>
</feature>
<feature type="helix" evidence="3">
    <location>
        <begin position="360"/>
        <end position="366"/>
    </location>
</feature>
<reference key="1">
    <citation type="journal article" date="1990" name="J. Bacteriol.">
        <title>Organization and sequence analysis of the 2,4-dichlorophenol hydroxylase and dichlorocatechol oxidative operons of plasmid pJP4.</title>
        <authorList>
            <person name="Perkins E.J."/>
            <person name="Gordon M.P."/>
            <person name="Caceres O."/>
            <person name="Lurquin P.F."/>
        </authorList>
    </citation>
    <scope>NUCLEOTIDE SEQUENCE [GENOMIC DNA]</scope>
    <source>
        <plasmid>pJP4</plasmid>
    </source>
</reference>
<reference key="2">
    <citation type="journal article" date="1989" name="Gene">
        <title>Operon structure and nucleotide homology of the chlorocatechol oxidation genes of plasmids pJP4 and pAC27.</title>
        <authorList>
            <person name="Ghosal D."/>
            <person name="You I.-S."/>
        </authorList>
    </citation>
    <scope>NUCLEOTIDE SEQUENCE [GENOMIC DNA]</scope>
    <source>
        <plasmid>pJP4</plasmid>
    </source>
</reference>
<reference key="3">
    <citation type="journal article" date="2004" name="Environ. Microbiol.">
        <title>Genetic organization of the catabolic plasmid pJP4 from Ralstonia eutropha JMP134 (pJP4) reveals mechanisms of adaptation to chloroaromatic pollutants and evolution of specialized chloroaromatic degradation pathways.</title>
        <authorList>
            <person name="Trefault N."/>
            <person name="De la Iglesia R."/>
            <person name="Molina A.M."/>
            <person name="Manzano M."/>
            <person name="Ledger T."/>
            <person name="Perez-Pantoja D."/>
            <person name="Sanchez M.A."/>
            <person name="Stuardo M."/>
            <person name="Gonzalez B."/>
        </authorList>
    </citation>
    <scope>NUCLEOTIDE SEQUENCE [GENOMIC DNA]</scope>
    <source>
        <plasmid>pJP4</plasmid>
    </source>
</reference>
<reference key="4">
    <citation type="journal article" date="2010" name="PLoS ONE">
        <title>The complete multipartite genome sequence of Cupriavidus necator JMP134, a versatile pollutant degrader.</title>
        <authorList>
            <person name="Lykidis A."/>
            <person name="Perez-Pantoja D."/>
            <person name="Ledger T."/>
            <person name="Mavromatis K."/>
            <person name="Anderson I.J."/>
            <person name="Ivanova N.N."/>
            <person name="Hooper S.D."/>
            <person name="Lapidus A."/>
            <person name="Lucas S."/>
            <person name="Gonzalez B."/>
            <person name="Kyrpides N.C."/>
        </authorList>
    </citation>
    <scope>NUCLEOTIDE SEQUENCE [LARGE SCALE GENOMIC DNA]</scope>
    <source>
        <strain>JMP134 / LMG 1197</strain>
        <plasmid>pPJ4</plasmid>
    </source>
</reference>
<reference key="5">
    <citation type="journal article" date="1988" name="Nucleic Acids Res.">
        <title>Partial nucleotide sequence of the chlorocatechol degradative operon tfdCDEF of pJP4 and similarity to promoters of the chlorinated aromatic degradative operons tfdA and clcABD.</title>
        <authorList>
            <person name="Perkins E.J."/>
            <person name="Bolton G."/>
            <person name="Gordon M.P."/>
            <person name="Lurquin P.F."/>
        </authorList>
    </citation>
    <scope>NUCLEOTIDE SEQUENCE [GENOMIC DNA] OF 1-166</scope>
    <source>
        <plasmid>pJP4</plasmid>
    </source>
</reference>
<reference key="6">
    <citation type="journal article" date="1994" name="Acta Crystallogr. D">
        <title>Crystal structure of chloromuconate cycloisomerase from Alcaligenes eutrophus JMP134 (pJP4) at 3-A resolution.</title>
        <authorList>
            <person name="Hoier H."/>
            <person name="Schloemann M."/>
            <person name="Hammer A."/>
            <person name="Glusker J.P."/>
            <person name="Carrell H.L."/>
            <person name="Goldman A."/>
            <person name="Stezowski J.J."/>
            <person name="Heinemann U."/>
        </authorList>
    </citation>
    <scope>X-RAY CRYSTALLOGRAPHY (3.0 ANGSTROMS) IN COMPLEX WITH MANGANESE IONS</scope>
    <source>
        <plasmid>pJP4</plasmid>
    </source>
</reference>
<reference key="7">
    <citation type="journal article" date="1996" name="Acta Crystallogr. D">
        <title>A re-evaluation of the crystal structure of chloromuconate cycloisomerase.</title>
        <authorList>
            <person name="Kleywegt G.J."/>
            <person name="Jones T.A."/>
        </authorList>
    </citation>
    <scope>X-RAY CRYSTALLOGRAPHY (3.0 ANGSTROMS)</scope>
    <source>
        <plasmid>pJP4</plasmid>
    </source>
</reference>
<protein>
    <recommendedName>
        <fullName>Chloromuconate cycloisomerase</fullName>
        <ecNumber>5.5.1.7</ecNumber>
    </recommendedName>
    <alternativeName>
        <fullName>Muconate cycloisomerase II</fullName>
    </alternativeName>
</protein>
<geneLocation type="plasmid">
    <name>pJP4</name>
</geneLocation>
<geneLocation type="plasmid">
    <name>pPJ4</name>
</geneLocation>
<keyword id="KW-0002">3D-structure</keyword>
<keyword id="KW-0058">Aromatic hydrocarbons catabolism</keyword>
<keyword id="KW-0413">Isomerase</keyword>
<keyword id="KW-0464">Manganese</keyword>
<keyword id="KW-0479">Metal-binding</keyword>
<keyword id="KW-0614">Plasmid</keyword>